<reference key="1">
    <citation type="submission" date="2007-03" db="EMBL/GenBank/DDBJ databases">
        <authorList>
            <consortium name="NIH - Xenopus Gene Collection (XGC) project"/>
        </authorList>
    </citation>
    <scope>NUCLEOTIDE SEQUENCE [LARGE SCALE MRNA]</scope>
    <source>
        <tissue>Embryo</tissue>
    </source>
</reference>
<dbReference type="EC" id="2.1.1.-" evidence="2"/>
<dbReference type="EMBL" id="BC135861">
    <property type="protein sequence ID" value="AAI35862.1"/>
    <property type="molecule type" value="mRNA"/>
</dbReference>
<dbReference type="SMR" id="A4QNL8"/>
<dbReference type="FunCoup" id="A4QNL8">
    <property type="interactions" value="911"/>
</dbReference>
<dbReference type="STRING" id="8364.ENSXETP00000002039"/>
<dbReference type="PaxDb" id="8364-ENSXETP00000048602"/>
<dbReference type="eggNOG" id="KOG2506">
    <property type="taxonomic scope" value="Eukaryota"/>
</dbReference>
<dbReference type="HOGENOM" id="CLU_021322_1_0_1"/>
<dbReference type="InParanoid" id="A4QNL8"/>
<dbReference type="TreeFam" id="TF323420"/>
<dbReference type="Proteomes" id="UP000008143">
    <property type="component" value="Unplaced"/>
</dbReference>
<dbReference type="Bgee" id="ENSXETG00000022451">
    <property type="expression patterns" value="Expressed in egg cell and 15 other cell types or tissues"/>
</dbReference>
<dbReference type="GO" id="GO:0005739">
    <property type="term" value="C:mitochondrion"/>
    <property type="evidence" value="ECO:0007669"/>
    <property type="project" value="UniProtKB-SubCell"/>
</dbReference>
<dbReference type="GO" id="GO:0003723">
    <property type="term" value="F:RNA binding"/>
    <property type="evidence" value="ECO:0007669"/>
    <property type="project" value="InterPro"/>
</dbReference>
<dbReference type="GO" id="GO:0008650">
    <property type="term" value="F:rRNA (uridine-2'-O-)-methyltransferase activity"/>
    <property type="evidence" value="ECO:0007669"/>
    <property type="project" value="RHEA"/>
</dbReference>
<dbReference type="CDD" id="cd18106">
    <property type="entry name" value="SpoU-like_RNMTL1"/>
    <property type="match status" value="1"/>
</dbReference>
<dbReference type="Gene3D" id="3.30.1330.30">
    <property type="match status" value="1"/>
</dbReference>
<dbReference type="Gene3D" id="3.40.1280.10">
    <property type="match status" value="1"/>
</dbReference>
<dbReference type="InterPro" id="IPR029028">
    <property type="entry name" value="Alpha/beta_knot_MTases"/>
</dbReference>
<dbReference type="InterPro" id="IPR053888">
    <property type="entry name" value="MRM3-like_sub_bind"/>
</dbReference>
<dbReference type="InterPro" id="IPR029064">
    <property type="entry name" value="Ribosomal_eL30-like_sf"/>
</dbReference>
<dbReference type="InterPro" id="IPR051259">
    <property type="entry name" value="rRNA_Methyltransferase"/>
</dbReference>
<dbReference type="InterPro" id="IPR001537">
    <property type="entry name" value="SpoU_MeTrfase"/>
</dbReference>
<dbReference type="InterPro" id="IPR013123">
    <property type="entry name" value="SpoU_subst-bd"/>
</dbReference>
<dbReference type="InterPro" id="IPR029026">
    <property type="entry name" value="tRNA_m1G_MTases_N"/>
</dbReference>
<dbReference type="PANTHER" id="PTHR43191">
    <property type="entry name" value="RRNA METHYLTRANSFERASE 3"/>
    <property type="match status" value="1"/>
</dbReference>
<dbReference type="PANTHER" id="PTHR43191:SF2">
    <property type="entry name" value="RRNA METHYLTRANSFERASE 3, MITOCHONDRIAL"/>
    <property type="match status" value="1"/>
</dbReference>
<dbReference type="Pfam" id="PF22435">
    <property type="entry name" value="MRM3-like_sub_bind"/>
    <property type="match status" value="1"/>
</dbReference>
<dbReference type="Pfam" id="PF00588">
    <property type="entry name" value="SpoU_methylase"/>
    <property type="match status" value="1"/>
</dbReference>
<dbReference type="SMART" id="SM00967">
    <property type="entry name" value="SpoU_sub_bind"/>
    <property type="match status" value="1"/>
</dbReference>
<dbReference type="SUPFAM" id="SSF75217">
    <property type="entry name" value="alpha/beta knot"/>
    <property type="match status" value="1"/>
</dbReference>
<dbReference type="SUPFAM" id="SSF55315">
    <property type="entry name" value="L30e-like"/>
    <property type="match status" value="1"/>
</dbReference>
<gene>
    <name evidence="2" type="primary">mrm3</name>
    <name evidence="2" type="synonym">rnmtl1</name>
</gene>
<name>MRM3_XENTR</name>
<evidence type="ECO:0000250" key="1"/>
<evidence type="ECO:0000250" key="2">
    <source>
        <dbReference type="UniProtKB" id="Q9HC36"/>
    </source>
</evidence>
<evidence type="ECO:0000255" key="3"/>
<evidence type="ECO:0000256" key="4">
    <source>
        <dbReference type="SAM" id="MobiDB-lite"/>
    </source>
</evidence>
<evidence type="ECO:0000305" key="5"/>
<feature type="transit peptide" description="Mitochondrion" evidence="3">
    <location>
        <begin position="1"/>
        <end position="47"/>
    </location>
</feature>
<feature type="chain" id="PRO_0000311306" description="rRNA methyltransferase 3, mitochondrial">
    <location>
        <begin position="48"/>
        <end position="415"/>
    </location>
</feature>
<feature type="region of interest" description="Disordered" evidence="4">
    <location>
        <begin position="41"/>
        <end position="73"/>
    </location>
</feature>
<feature type="compositionally biased region" description="Basic and acidic residues" evidence="4">
    <location>
        <begin position="44"/>
        <end position="56"/>
    </location>
</feature>
<feature type="compositionally biased region" description="Polar residues" evidence="4">
    <location>
        <begin position="59"/>
        <end position="73"/>
    </location>
</feature>
<feature type="binding site" evidence="1">
    <location>
        <position position="357"/>
    </location>
    <ligand>
        <name>S-adenosyl-L-methionine</name>
        <dbReference type="ChEBI" id="CHEBI:59789"/>
    </ligand>
</feature>
<feature type="binding site" evidence="1">
    <location>
        <position position="381"/>
    </location>
    <ligand>
        <name>S-adenosyl-L-methionine</name>
        <dbReference type="ChEBI" id="CHEBI:59789"/>
    </ligand>
</feature>
<feature type="binding site" evidence="1">
    <location>
        <position position="390"/>
    </location>
    <ligand>
        <name>S-adenosyl-L-methionine</name>
        <dbReference type="ChEBI" id="CHEBI:59789"/>
    </ligand>
</feature>
<sequence>MAALCRGTVRACILKPLGLSVSLQVKRNVRALRRTPVRVLPAAEKGRERKEVEARRPQQPRQSEYQTRTSQGVRQASALTEAPALEFRYERALPGDKRLSKVVTIAKSKKFRDRHGQVLLEGRRLLTDALESGAVLQTLFFSRVDYLKLFPPDKLRKANLIKVNFDNIKIWSDVVAPQGLMGIFAKPDHEKISYPTTQTKHTLPLSLICDNIRDPGNLGTILRCAAGAGCNKVLLTKGCVDAWEPKVLRAGMGAHFRLPVISSLDWDIVPNYLSAGTKVFLADNFRPDMKHKTGDVSEKASDYGWVSTNPRRILITEEGYESSSDEEDNADKLYIPGLEVQSYFESWAQSPCAIVIGGETHGLSIESLLLAEKSNGKRLYIPVVPDIDSLNSAMAASILLFEGKRQIENTMKRKS</sequence>
<organism>
    <name type="scientific">Xenopus tropicalis</name>
    <name type="common">Western clawed frog</name>
    <name type="synonym">Silurana tropicalis</name>
    <dbReference type="NCBI Taxonomy" id="8364"/>
    <lineage>
        <taxon>Eukaryota</taxon>
        <taxon>Metazoa</taxon>
        <taxon>Chordata</taxon>
        <taxon>Craniata</taxon>
        <taxon>Vertebrata</taxon>
        <taxon>Euteleostomi</taxon>
        <taxon>Amphibia</taxon>
        <taxon>Batrachia</taxon>
        <taxon>Anura</taxon>
        <taxon>Pipoidea</taxon>
        <taxon>Pipidae</taxon>
        <taxon>Xenopodinae</taxon>
        <taxon>Xenopus</taxon>
        <taxon>Silurana</taxon>
    </lineage>
</organism>
<accession>A4QNL8</accession>
<proteinExistence type="evidence at transcript level"/>
<comment type="function">
    <text evidence="2">S-adenosyl-L-methionine-dependent 2'-O-ribose methyltransferase that catalyzes the formation of 2'-O-methylguanosine at position 1370 (Gm1370) in the mitochondrial large subunit ribosomal RNA (mtLSU rRNA), a conserved modification in the peptidyl transferase domain of the mtLSU rRNA. Also required for formation of 2'-O-methyluridine at position 1369 (Um1369) mediated by MRM2.</text>
</comment>
<comment type="catalytic activity">
    <reaction evidence="2">
        <text>a uridine in rRNA + S-adenosyl-L-methionine = a 2'-O-methyluridine in rRNA + S-adenosyl-L-homocysteine + H(+)</text>
        <dbReference type="Rhea" id="RHEA:54152"/>
        <dbReference type="Rhea" id="RHEA-COMP:13812"/>
        <dbReference type="Rhea" id="RHEA-COMP:13814"/>
        <dbReference type="ChEBI" id="CHEBI:15378"/>
        <dbReference type="ChEBI" id="CHEBI:57856"/>
        <dbReference type="ChEBI" id="CHEBI:59789"/>
        <dbReference type="ChEBI" id="CHEBI:65315"/>
        <dbReference type="ChEBI" id="CHEBI:74478"/>
    </reaction>
</comment>
<comment type="subcellular location">
    <subcellularLocation>
        <location evidence="2">Mitochondrion</location>
    </subcellularLocation>
</comment>
<comment type="similarity">
    <text evidence="5">Belongs to the class IV-like SAM-binding methyltransferase superfamily. RNA methyltransferase TrmH family.</text>
</comment>
<keyword id="KW-0489">Methyltransferase</keyword>
<keyword id="KW-0496">Mitochondrion</keyword>
<keyword id="KW-1185">Reference proteome</keyword>
<keyword id="KW-0698">rRNA processing</keyword>
<keyword id="KW-0949">S-adenosyl-L-methionine</keyword>
<keyword id="KW-0808">Transferase</keyword>
<keyword id="KW-0809">Transit peptide</keyword>
<protein>
    <recommendedName>
        <fullName evidence="2">rRNA methyltransferase 3, mitochondrial</fullName>
        <ecNumber evidence="2">2.1.1.-</ecNumber>
    </recommendedName>
    <alternativeName>
        <fullName evidence="2">RNA methyltransferase-like protein 1</fullName>
    </alternativeName>
    <alternativeName>
        <fullName evidence="2">rRNA (guanosine-2'-O)-methyltransferase</fullName>
    </alternativeName>
</protein>